<name>GPN3_HUMAN</name>
<accession>Q9UHW5</accession>
<accession>B2RC54</accession>
<accession>D4YWV1</accession>
<accession>F5H759</accession>
<accession>Q53FS3</accession>
<accession>Q6UVZ6</accession>
<accession>Q7Z3D3</accession>
<accession>Q8NEI2</accession>
<accession>Q96HK9</accession>
<gene>
    <name evidence="6 8" type="primary">GPN3</name>
    <name type="synonym">ATPBD1C</name>
    <name type="ORF">AD-009</name>
    <name type="ORF">UNQ1876/PRO4319</name>
</gene>
<feature type="chain" id="PRO_0000304790" description="GPN-loop GTPase 3">
    <location>
        <begin position="1"/>
        <end position="284"/>
    </location>
</feature>
<feature type="short sequence motif" description="Gly-Pro-Asn (GPN)-loop; involved in dimer interface" evidence="1">
    <location>
        <begin position="72"/>
        <end position="74"/>
    </location>
</feature>
<feature type="binding site" evidence="1">
    <location>
        <begin position="13"/>
        <end position="18"/>
    </location>
    <ligand>
        <name>GTP</name>
        <dbReference type="ChEBI" id="CHEBI:37565"/>
    </ligand>
</feature>
<feature type="binding site" evidence="1">
    <location>
        <begin position="174"/>
        <end position="177"/>
    </location>
    <ligand>
        <name>GTP</name>
        <dbReference type="ChEBI" id="CHEBI:37565"/>
    </ligand>
</feature>
<feature type="site" description="Stabilizes the phosphate intermediate; shared with dimeric partner" evidence="1">
    <location>
        <position position="74"/>
    </location>
</feature>
<feature type="splice variant" id="VSP_047327" description="In isoform 3." evidence="7">
    <original>MPRYAQLVMGPAGSGK</original>
    <variation>MLPKTRGAFHFSIPDPQHICKSRGSPYRSNVCTQTTDRSTWRKDAELYLLSVITQ</variation>
    <location>
        <begin position="1"/>
        <end position="16"/>
    </location>
</feature>
<feature type="splice variant" id="VSP_028125" description="In isoform 2." evidence="5">
    <original>G</original>
    <variation>GKVRICGDKER</variation>
    <location>
        <position position="15"/>
    </location>
</feature>
<feature type="sequence variant" id="VAR_035107" description="In dbSNP:rs17856906." evidence="2">
    <original>A</original>
    <variation>V</variation>
    <location>
        <position position="52"/>
    </location>
</feature>
<feature type="sequence variant" id="VAR_035108" description="In dbSNP:rs17850320." evidence="2">
    <original>V</original>
    <variation>A</variation>
    <location>
        <position position="244"/>
    </location>
</feature>
<feature type="sequence conflict" description="In Ref. 1; AAQ76821 and 3; AAF17210." evidence="7" ref="1 3">
    <original>QL</original>
    <variation>HC</variation>
    <location>
        <begin position="6"/>
        <end position="7"/>
    </location>
</feature>
<feature type="sequence conflict" description="In Ref. 1; AAQ76821 and 3; AAF17210." evidence="7" ref="1 3">
    <original>GSGK</original>
    <variation>HAKR</variation>
    <location>
        <begin position="13"/>
        <end position="16"/>
    </location>
</feature>
<feature type="sequence conflict" description="In Ref. 4; AAQ89437." evidence="7" ref="4">
    <original>Q</original>
    <variation>H</variation>
    <location>
        <position position="122"/>
    </location>
</feature>
<sequence length="284" mass="32761">MPRYAQLVMGPAGSGKSTYCATMVQHCEALNRSVQVVNLDPAAEHFNYSVMADIRELIEVDDVMEDDSLRFGPNGGLVFCMEYFANNFDWLENCLGHVEDDYILFDCPGQIELYTHLPVMKQLVQQLEQWEFRVCGVFLVDSQFMVESFKFISGILAALSAMISLEIPQVNIMTKMDLLSKKAKKEIEKFLDPDMYSLLEDSTSDLRSKKFKKLTKAICGLIDDYSMVRFLPYDQSDEESMNIVLQHIDFAIQYGEDLEFKEPKEREDESSSMFDEYFQECQDE</sequence>
<proteinExistence type="evidence at protein level"/>
<reference key="1">
    <citation type="journal article" date="2006" name="BMC Genomics">
        <title>NovelFam3000 -- uncharacterized human protein domains conserved across model organisms.</title>
        <authorList>
            <person name="Kemmer D."/>
            <person name="Podowski R.M."/>
            <person name="Arenillas D."/>
            <person name="Lim J."/>
            <person name="Hodges E."/>
            <person name="Roth P."/>
            <person name="Sonnhammer E.L.L."/>
            <person name="Hoeoeg C."/>
            <person name="Wasserman W.W."/>
        </authorList>
    </citation>
    <scope>NUCLEOTIDE SEQUENCE [MRNA] (ISOFORM 1)</scope>
</reference>
<reference key="2">
    <citation type="submission" date="2008-04" db="EMBL/GenBank/DDBJ databases">
        <title>GPN-loop GTPases: a new GTPase family regulated by dimerization.</title>
        <authorList>
            <person name="Charrier-Savournin F."/>
            <person name="Roussi S."/>
            <person name="Alonso B."/>
            <person name="Chaumont V."/>
            <person name="Locard-Paulet M."/>
            <person name="Bellanger L."/>
            <person name="Pellequer J.L."/>
            <person name="Godon C."/>
            <person name="Armengaud J."/>
        </authorList>
    </citation>
    <scope>NUCLEOTIDE SEQUENCE [MRNA] (ISOFORM 1)</scope>
    <source>
        <tissue>Liver</tissue>
        <tissue>Ovary</tissue>
    </source>
</reference>
<reference key="3">
    <citation type="journal article" date="2000" name="Proc. Natl. Acad. Sci. U.S.A.">
        <title>Gene expression profiling in the human hypothalamus-pituitary-adrenal axis and full-length cDNA cloning.</title>
        <authorList>
            <person name="Hu R.-M."/>
            <person name="Han Z.-G."/>
            <person name="Song H.-D."/>
            <person name="Peng Y.-D."/>
            <person name="Huang Q.-H."/>
            <person name="Ren S.-X."/>
            <person name="Gu Y.-J."/>
            <person name="Huang C.-H."/>
            <person name="Li Y.-B."/>
            <person name="Jiang C.-L."/>
            <person name="Fu G."/>
            <person name="Zhang Q.-H."/>
            <person name="Gu B.-W."/>
            <person name="Dai M."/>
            <person name="Mao Y.-F."/>
            <person name="Gao G.-F."/>
            <person name="Rong R."/>
            <person name="Ye M."/>
            <person name="Zhou J."/>
            <person name="Xu S.-H."/>
            <person name="Gu J."/>
            <person name="Shi J.-X."/>
            <person name="Jin W.-R."/>
            <person name="Zhang C.-K."/>
            <person name="Wu T.-M."/>
            <person name="Huang G.-Y."/>
            <person name="Chen Z."/>
            <person name="Chen M.-D."/>
            <person name="Chen J.-L."/>
        </authorList>
    </citation>
    <scope>NUCLEOTIDE SEQUENCE [LARGE SCALE MRNA] (ISOFORM 1)</scope>
    <source>
        <tissue>Adrenal gland</tissue>
    </source>
</reference>
<reference key="4">
    <citation type="journal article" date="2003" name="Genome Res.">
        <title>The secreted protein discovery initiative (SPDI), a large-scale effort to identify novel human secreted and transmembrane proteins: a bioinformatics assessment.</title>
        <authorList>
            <person name="Clark H.F."/>
            <person name="Gurney A.L."/>
            <person name="Abaya E."/>
            <person name="Baker K."/>
            <person name="Baldwin D.T."/>
            <person name="Brush J."/>
            <person name="Chen J."/>
            <person name="Chow B."/>
            <person name="Chui C."/>
            <person name="Crowley C."/>
            <person name="Currell B."/>
            <person name="Deuel B."/>
            <person name="Dowd P."/>
            <person name="Eaton D."/>
            <person name="Foster J.S."/>
            <person name="Grimaldi C."/>
            <person name="Gu Q."/>
            <person name="Hass P.E."/>
            <person name="Heldens S."/>
            <person name="Huang A."/>
            <person name="Kim H.S."/>
            <person name="Klimowski L."/>
            <person name="Jin Y."/>
            <person name="Johnson S."/>
            <person name="Lee J."/>
            <person name="Lewis L."/>
            <person name="Liao D."/>
            <person name="Mark M.R."/>
            <person name="Robbie E."/>
            <person name="Sanchez C."/>
            <person name="Schoenfeld J."/>
            <person name="Seshagiri S."/>
            <person name="Simmons L."/>
            <person name="Singh J."/>
            <person name="Smith V."/>
            <person name="Stinson J."/>
            <person name="Vagts A."/>
            <person name="Vandlen R.L."/>
            <person name="Watanabe C."/>
            <person name="Wieand D."/>
            <person name="Woods K."/>
            <person name="Xie M.-H."/>
            <person name="Yansura D.G."/>
            <person name="Yi S."/>
            <person name="Yu G."/>
            <person name="Yuan J."/>
            <person name="Zhang M."/>
            <person name="Zhang Z."/>
            <person name="Goddard A.D."/>
            <person name="Wood W.I."/>
            <person name="Godowski P.J."/>
            <person name="Gray A.M."/>
        </authorList>
    </citation>
    <scope>NUCLEOTIDE SEQUENCE [LARGE SCALE MRNA] (ISOFORM 1)</scope>
</reference>
<reference key="5">
    <citation type="journal article" date="2007" name="BMC Genomics">
        <title>The full-ORF clone resource of the German cDNA consortium.</title>
        <authorList>
            <person name="Bechtel S."/>
            <person name="Rosenfelder H."/>
            <person name="Duda A."/>
            <person name="Schmidt C.P."/>
            <person name="Ernst U."/>
            <person name="Wellenreuther R."/>
            <person name="Mehrle A."/>
            <person name="Schuster C."/>
            <person name="Bahr A."/>
            <person name="Bloecker H."/>
            <person name="Heubner D."/>
            <person name="Hoerlein A."/>
            <person name="Michel G."/>
            <person name="Wedler H."/>
            <person name="Koehrer K."/>
            <person name="Ottenwaelder B."/>
            <person name="Poustka A."/>
            <person name="Wiemann S."/>
            <person name="Schupp I."/>
        </authorList>
    </citation>
    <scope>NUCLEOTIDE SEQUENCE [LARGE SCALE MRNA] (ISOFORM 2)</scope>
    <source>
        <tissue>Retina</tissue>
    </source>
</reference>
<reference key="6">
    <citation type="journal article" date="2004" name="Nat. Genet.">
        <title>Complete sequencing and characterization of 21,243 full-length human cDNAs.</title>
        <authorList>
            <person name="Ota T."/>
            <person name="Suzuki Y."/>
            <person name="Nishikawa T."/>
            <person name="Otsuki T."/>
            <person name="Sugiyama T."/>
            <person name="Irie R."/>
            <person name="Wakamatsu A."/>
            <person name="Hayashi K."/>
            <person name="Sato H."/>
            <person name="Nagai K."/>
            <person name="Kimura K."/>
            <person name="Makita H."/>
            <person name="Sekine M."/>
            <person name="Obayashi M."/>
            <person name="Nishi T."/>
            <person name="Shibahara T."/>
            <person name="Tanaka T."/>
            <person name="Ishii S."/>
            <person name="Yamamoto J."/>
            <person name="Saito K."/>
            <person name="Kawai Y."/>
            <person name="Isono Y."/>
            <person name="Nakamura Y."/>
            <person name="Nagahari K."/>
            <person name="Murakami K."/>
            <person name="Yasuda T."/>
            <person name="Iwayanagi T."/>
            <person name="Wagatsuma M."/>
            <person name="Shiratori A."/>
            <person name="Sudo H."/>
            <person name="Hosoiri T."/>
            <person name="Kaku Y."/>
            <person name="Kodaira H."/>
            <person name="Kondo H."/>
            <person name="Sugawara M."/>
            <person name="Takahashi M."/>
            <person name="Kanda K."/>
            <person name="Yokoi T."/>
            <person name="Furuya T."/>
            <person name="Kikkawa E."/>
            <person name="Omura Y."/>
            <person name="Abe K."/>
            <person name="Kamihara K."/>
            <person name="Katsuta N."/>
            <person name="Sato K."/>
            <person name="Tanikawa M."/>
            <person name="Yamazaki M."/>
            <person name="Ninomiya K."/>
            <person name="Ishibashi T."/>
            <person name="Yamashita H."/>
            <person name="Murakawa K."/>
            <person name="Fujimori K."/>
            <person name="Tanai H."/>
            <person name="Kimata M."/>
            <person name="Watanabe M."/>
            <person name="Hiraoka S."/>
            <person name="Chiba Y."/>
            <person name="Ishida S."/>
            <person name="Ono Y."/>
            <person name="Takiguchi S."/>
            <person name="Watanabe S."/>
            <person name="Yosida M."/>
            <person name="Hotuta T."/>
            <person name="Kusano J."/>
            <person name="Kanehori K."/>
            <person name="Takahashi-Fujii A."/>
            <person name="Hara H."/>
            <person name="Tanase T.-O."/>
            <person name="Nomura Y."/>
            <person name="Togiya S."/>
            <person name="Komai F."/>
            <person name="Hara R."/>
            <person name="Takeuchi K."/>
            <person name="Arita M."/>
            <person name="Imose N."/>
            <person name="Musashino K."/>
            <person name="Yuuki H."/>
            <person name="Oshima A."/>
            <person name="Sasaki N."/>
            <person name="Aotsuka S."/>
            <person name="Yoshikawa Y."/>
            <person name="Matsunawa H."/>
            <person name="Ichihara T."/>
            <person name="Shiohata N."/>
            <person name="Sano S."/>
            <person name="Moriya S."/>
            <person name="Momiyama H."/>
            <person name="Satoh N."/>
            <person name="Takami S."/>
            <person name="Terashima Y."/>
            <person name="Suzuki O."/>
            <person name="Nakagawa S."/>
            <person name="Senoh A."/>
            <person name="Mizoguchi H."/>
            <person name="Goto Y."/>
            <person name="Shimizu F."/>
            <person name="Wakebe H."/>
            <person name="Hishigaki H."/>
            <person name="Watanabe T."/>
            <person name="Sugiyama A."/>
            <person name="Takemoto M."/>
            <person name="Kawakami B."/>
            <person name="Yamazaki M."/>
            <person name="Watanabe K."/>
            <person name="Kumagai A."/>
            <person name="Itakura S."/>
            <person name="Fukuzumi Y."/>
            <person name="Fujimori Y."/>
            <person name="Komiyama M."/>
            <person name="Tashiro H."/>
            <person name="Tanigami A."/>
            <person name="Fujiwara T."/>
            <person name="Ono T."/>
            <person name="Yamada K."/>
            <person name="Fujii Y."/>
            <person name="Ozaki K."/>
            <person name="Hirao M."/>
            <person name="Ohmori Y."/>
            <person name="Kawabata A."/>
            <person name="Hikiji T."/>
            <person name="Kobatake N."/>
            <person name="Inagaki H."/>
            <person name="Ikema Y."/>
            <person name="Okamoto S."/>
            <person name="Okitani R."/>
            <person name="Kawakami T."/>
            <person name="Noguchi S."/>
            <person name="Itoh T."/>
            <person name="Shigeta K."/>
            <person name="Senba T."/>
            <person name="Matsumura K."/>
            <person name="Nakajima Y."/>
            <person name="Mizuno T."/>
            <person name="Morinaga M."/>
            <person name="Sasaki M."/>
            <person name="Togashi T."/>
            <person name="Oyama M."/>
            <person name="Hata H."/>
            <person name="Watanabe M."/>
            <person name="Komatsu T."/>
            <person name="Mizushima-Sugano J."/>
            <person name="Satoh T."/>
            <person name="Shirai Y."/>
            <person name="Takahashi Y."/>
            <person name="Nakagawa K."/>
            <person name="Okumura K."/>
            <person name="Nagase T."/>
            <person name="Nomura N."/>
            <person name="Kikuchi H."/>
            <person name="Masuho Y."/>
            <person name="Yamashita R."/>
            <person name="Nakai K."/>
            <person name="Yada T."/>
            <person name="Nakamura Y."/>
            <person name="Ohara O."/>
            <person name="Isogai T."/>
            <person name="Sugano S."/>
        </authorList>
    </citation>
    <scope>NUCLEOTIDE SEQUENCE [LARGE SCALE MRNA] (ISOFORM 1)</scope>
    <source>
        <tissue>Lung</tissue>
    </source>
</reference>
<reference key="7">
    <citation type="submission" date="2005-04" db="EMBL/GenBank/DDBJ databases">
        <authorList>
            <person name="Suzuki Y."/>
            <person name="Sugano S."/>
            <person name="Totoki Y."/>
            <person name="Toyoda A."/>
            <person name="Takeda T."/>
            <person name="Sakaki Y."/>
            <person name="Tanaka A."/>
            <person name="Yokoyama S."/>
        </authorList>
    </citation>
    <scope>NUCLEOTIDE SEQUENCE [LARGE SCALE MRNA] (ISOFORM 1)</scope>
    <source>
        <tissue>Spleen</tissue>
    </source>
</reference>
<reference key="8">
    <citation type="journal article" date="2006" name="Nature">
        <title>The finished DNA sequence of human chromosome 12.</title>
        <authorList>
            <person name="Scherer S.E."/>
            <person name="Muzny D.M."/>
            <person name="Buhay C.J."/>
            <person name="Chen R."/>
            <person name="Cree A."/>
            <person name="Ding Y."/>
            <person name="Dugan-Rocha S."/>
            <person name="Gill R."/>
            <person name="Gunaratne P."/>
            <person name="Harris R.A."/>
            <person name="Hawes A.C."/>
            <person name="Hernandez J."/>
            <person name="Hodgson A.V."/>
            <person name="Hume J."/>
            <person name="Jackson A."/>
            <person name="Khan Z.M."/>
            <person name="Kovar-Smith C."/>
            <person name="Lewis L.R."/>
            <person name="Lozado R.J."/>
            <person name="Metzker M.L."/>
            <person name="Milosavljevic A."/>
            <person name="Miner G.R."/>
            <person name="Montgomery K.T."/>
            <person name="Morgan M.B."/>
            <person name="Nazareth L.V."/>
            <person name="Scott G."/>
            <person name="Sodergren E."/>
            <person name="Song X.-Z."/>
            <person name="Steffen D."/>
            <person name="Lovering R.C."/>
            <person name="Wheeler D.A."/>
            <person name="Worley K.C."/>
            <person name="Yuan Y."/>
            <person name="Zhang Z."/>
            <person name="Adams C.Q."/>
            <person name="Ansari-Lari M.A."/>
            <person name="Ayele M."/>
            <person name="Brown M.J."/>
            <person name="Chen G."/>
            <person name="Chen Z."/>
            <person name="Clerc-Blankenburg K.P."/>
            <person name="Davis C."/>
            <person name="Delgado O."/>
            <person name="Dinh H.H."/>
            <person name="Draper H."/>
            <person name="Gonzalez-Garay M.L."/>
            <person name="Havlak P."/>
            <person name="Jackson L.R."/>
            <person name="Jacob L.S."/>
            <person name="Kelly S.H."/>
            <person name="Li L."/>
            <person name="Li Z."/>
            <person name="Liu J."/>
            <person name="Liu W."/>
            <person name="Lu J."/>
            <person name="Maheshwari M."/>
            <person name="Nguyen B.-V."/>
            <person name="Okwuonu G.O."/>
            <person name="Pasternak S."/>
            <person name="Perez L.M."/>
            <person name="Plopper F.J.H."/>
            <person name="Santibanez J."/>
            <person name="Shen H."/>
            <person name="Tabor P.E."/>
            <person name="Verduzco D."/>
            <person name="Waldron L."/>
            <person name="Wang Q."/>
            <person name="Williams G.A."/>
            <person name="Zhang J."/>
            <person name="Zhou J."/>
            <person name="Allen C.C."/>
            <person name="Amin A.G."/>
            <person name="Anyalebechi V."/>
            <person name="Bailey M."/>
            <person name="Barbaria J.A."/>
            <person name="Bimage K.E."/>
            <person name="Bryant N.P."/>
            <person name="Burch P.E."/>
            <person name="Burkett C.E."/>
            <person name="Burrell K.L."/>
            <person name="Calderon E."/>
            <person name="Cardenas V."/>
            <person name="Carter K."/>
            <person name="Casias K."/>
            <person name="Cavazos I."/>
            <person name="Cavazos S.R."/>
            <person name="Ceasar H."/>
            <person name="Chacko J."/>
            <person name="Chan S.N."/>
            <person name="Chavez D."/>
            <person name="Christopoulos C."/>
            <person name="Chu J."/>
            <person name="Cockrell R."/>
            <person name="Cox C.D."/>
            <person name="Dang M."/>
            <person name="Dathorne S.R."/>
            <person name="David R."/>
            <person name="Davis C.M."/>
            <person name="Davy-Carroll L."/>
            <person name="Deshazo D.R."/>
            <person name="Donlin J.E."/>
            <person name="D'Souza L."/>
            <person name="Eaves K.A."/>
            <person name="Egan A."/>
            <person name="Emery-Cohen A.J."/>
            <person name="Escotto M."/>
            <person name="Flagg N."/>
            <person name="Forbes L.D."/>
            <person name="Gabisi A.M."/>
            <person name="Garza M."/>
            <person name="Hamilton C."/>
            <person name="Henderson N."/>
            <person name="Hernandez O."/>
            <person name="Hines S."/>
            <person name="Hogues M.E."/>
            <person name="Huang M."/>
            <person name="Idlebird D.G."/>
            <person name="Johnson R."/>
            <person name="Jolivet A."/>
            <person name="Jones S."/>
            <person name="Kagan R."/>
            <person name="King L.M."/>
            <person name="Leal B."/>
            <person name="Lebow H."/>
            <person name="Lee S."/>
            <person name="LeVan J.M."/>
            <person name="Lewis L.C."/>
            <person name="London P."/>
            <person name="Lorensuhewa L.M."/>
            <person name="Loulseged H."/>
            <person name="Lovett D.A."/>
            <person name="Lucier A."/>
            <person name="Lucier R.L."/>
            <person name="Ma J."/>
            <person name="Madu R.C."/>
            <person name="Mapua P."/>
            <person name="Martindale A.D."/>
            <person name="Martinez E."/>
            <person name="Massey E."/>
            <person name="Mawhiney S."/>
            <person name="Meador M.G."/>
            <person name="Mendez S."/>
            <person name="Mercado C."/>
            <person name="Mercado I.C."/>
            <person name="Merritt C.E."/>
            <person name="Miner Z.L."/>
            <person name="Minja E."/>
            <person name="Mitchell T."/>
            <person name="Mohabbat F."/>
            <person name="Mohabbat K."/>
            <person name="Montgomery B."/>
            <person name="Moore N."/>
            <person name="Morris S."/>
            <person name="Munidasa M."/>
            <person name="Ngo R.N."/>
            <person name="Nguyen N.B."/>
            <person name="Nickerson E."/>
            <person name="Nwaokelemeh O.O."/>
            <person name="Nwokenkwo S."/>
            <person name="Obregon M."/>
            <person name="Oguh M."/>
            <person name="Oragunye N."/>
            <person name="Oviedo R.J."/>
            <person name="Parish B.J."/>
            <person name="Parker D.N."/>
            <person name="Parrish J."/>
            <person name="Parks K.L."/>
            <person name="Paul H.A."/>
            <person name="Payton B.A."/>
            <person name="Perez A."/>
            <person name="Perrin W."/>
            <person name="Pickens A."/>
            <person name="Primus E.L."/>
            <person name="Pu L.-L."/>
            <person name="Puazo M."/>
            <person name="Quiles M.M."/>
            <person name="Quiroz J.B."/>
            <person name="Rabata D."/>
            <person name="Reeves K."/>
            <person name="Ruiz S.J."/>
            <person name="Shao H."/>
            <person name="Sisson I."/>
            <person name="Sonaike T."/>
            <person name="Sorelle R.P."/>
            <person name="Sutton A.E."/>
            <person name="Svatek A.F."/>
            <person name="Svetz L.A."/>
            <person name="Tamerisa K.S."/>
            <person name="Taylor T.R."/>
            <person name="Teague B."/>
            <person name="Thomas N."/>
            <person name="Thorn R.D."/>
            <person name="Trejos Z.Y."/>
            <person name="Trevino B.K."/>
            <person name="Ukegbu O.N."/>
            <person name="Urban J.B."/>
            <person name="Vasquez L.I."/>
            <person name="Vera V.A."/>
            <person name="Villasana D.M."/>
            <person name="Wang L."/>
            <person name="Ward-Moore S."/>
            <person name="Warren J.T."/>
            <person name="Wei X."/>
            <person name="White F."/>
            <person name="Williamson A.L."/>
            <person name="Wleczyk R."/>
            <person name="Wooden H.S."/>
            <person name="Wooden S.H."/>
            <person name="Yen J."/>
            <person name="Yoon L."/>
            <person name="Yoon V."/>
            <person name="Zorrilla S.E."/>
            <person name="Nelson D."/>
            <person name="Kucherlapati R."/>
            <person name="Weinstock G."/>
            <person name="Gibbs R.A."/>
        </authorList>
    </citation>
    <scope>NUCLEOTIDE SEQUENCE [LARGE SCALE GENOMIC DNA]</scope>
</reference>
<reference key="9">
    <citation type="journal article" date="2004" name="Genome Res.">
        <title>The status, quality, and expansion of the NIH full-length cDNA project: the Mammalian Gene Collection (MGC).</title>
        <authorList>
            <consortium name="The MGC Project Team"/>
        </authorList>
    </citation>
    <scope>NUCLEOTIDE SEQUENCE [LARGE SCALE MRNA] (ISOFORM 1)</scope>
    <scope>VARIANTS VAL-52 AND ALA-244</scope>
    <source>
        <tissue>Bone marrow</tissue>
        <tissue>Lung</tissue>
    </source>
</reference>
<reference key="10">
    <citation type="journal article" date="2010" name="Mol. Cell">
        <title>HSP90 and its R2TP/Prefoldin-like cochaperone are involved in the cytoplasmic assembly of RNA polymerase II.</title>
        <authorList>
            <person name="Boulon S."/>
            <person name="Pradet-Balade B."/>
            <person name="Verheggen C."/>
            <person name="Molle D."/>
            <person name="Boireau S."/>
            <person name="Georgieva M."/>
            <person name="Azzag K."/>
            <person name="Robert M.C."/>
            <person name="Ahmad Y."/>
            <person name="Neel H."/>
            <person name="Lamond A.I."/>
            <person name="Bertrand E."/>
        </authorList>
    </citation>
    <scope>BINDING TO RNA POLYMERASE II</scope>
</reference>
<reference key="11">
    <citation type="journal article" date="2011" name="BMC Syst. Biol.">
        <title>Initial characterization of the human central proteome.</title>
        <authorList>
            <person name="Burkard T.R."/>
            <person name="Planyavsky M."/>
            <person name="Kaupe I."/>
            <person name="Breitwieser F.P."/>
            <person name="Buerckstuemmer T."/>
            <person name="Bennett K.L."/>
            <person name="Superti-Furga G."/>
            <person name="Colinge J."/>
        </authorList>
    </citation>
    <scope>IDENTIFICATION BY MASS SPECTROMETRY [LARGE SCALE ANALYSIS]</scope>
</reference>
<reference key="12">
    <citation type="journal article" date="2011" name="Mol. Cell. Biol.">
        <title>Human GTPases associate with RNA polymerase II to mediate its nuclear import.</title>
        <authorList>
            <person name="Carre C."/>
            <person name="Shiekhattar R."/>
        </authorList>
    </citation>
    <scope>FUNCTION</scope>
    <scope>BINDING TO RNA POLYMERASE II</scope>
    <scope>INTERACTION WITH GPN1; RPB1; RPB4 AND RPB7</scope>
</reference>
<dbReference type="EMBL" id="AY364262">
    <property type="protein sequence ID" value="AAQ76821.1"/>
    <property type="molecule type" value="mRNA"/>
</dbReference>
<dbReference type="EMBL" id="AM992619">
    <property type="protein sequence ID" value="CAQ52399.1"/>
    <property type="molecule type" value="mRNA"/>
</dbReference>
<dbReference type="EMBL" id="AM992620">
    <property type="protein sequence ID" value="CAQ52400.1"/>
    <property type="molecule type" value="mRNA"/>
</dbReference>
<dbReference type="EMBL" id="AF117229">
    <property type="protein sequence ID" value="AAF17210.1"/>
    <property type="molecule type" value="mRNA"/>
</dbReference>
<dbReference type="EMBL" id="AY359078">
    <property type="protein sequence ID" value="AAQ89437.1"/>
    <property type="molecule type" value="mRNA"/>
</dbReference>
<dbReference type="EMBL" id="BX537973">
    <property type="protein sequence ID" value="CAD97937.1"/>
    <property type="status" value="ALT_INIT"/>
    <property type="molecule type" value="mRNA"/>
</dbReference>
<dbReference type="EMBL" id="AK314946">
    <property type="protein sequence ID" value="BAG37451.1"/>
    <property type="molecule type" value="mRNA"/>
</dbReference>
<dbReference type="EMBL" id="AK223209">
    <property type="protein sequence ID" value="BAD96929.1"/>
    <property type="molecule type" value="mRNA"/>
</dbReference>
<dbReference type="EMBL" id="AC002350">
    <property type="status" value="NOT_ANNOTATED_CDS"/>
    <property type="molecule type" value="Genomic_DNA"/>
</dbReference>
<dbReference type="EMBL" id="AC144548">
    <property type="status" value="NOT_ANNOTATED_CDS"/>
    <property type="molecule type" value="Genomic_DNA"/>
</dbReference>
<dbReference type="EMBL" id="BC008416">
    <property type="protein sequence ID" value="AAH08416.1"/>
    <property type="molecule type" value="mRNA"/>
</dbReference>
<dbReference type="EMBL" id="BC031024">
    <property type="protein sequence ID" value="AAH31024.1"/>
    <property type="molecule type" value="mRNA"/>
</dbReference>
<dbReference type="CCDS" id="CCDS53830.1">
    <molecule id="Q9UHW5-2"/>
</dbReference>
<dbReference type="CCDS" id="CCDS53831.1">
    <molecule id="Q9UHW5-3"/>
</dbReference>
<dbReference type="CCDS" id="CCDS9147.1">
    <molecule id="Q9UHW5-1"/>
</dbReference>
<dbReference type="RefSeq" id="NP_001157844.1">
    <molecule id="Q9UHW5-3"/>
    <property type="nucleotide sequence ID" value="NM_001164372.2"/>
</dbReference>
<dbReference type="RefSeq" id="NP_001157845.1">
    <molecule id="Q9UHW5-2"/>
    <property type="nucleotide sequence ID" value="NM_001164373.2"/>
</dbReference>
<dbReference type="RefSeq" id="NP_057385.3">
    <molecule id="Q9UHW5-1"/>
    <property type="nucleotide sequence ID" value="NM_016301.3"/>
</dbReference>
<dbReference type="SMR" id="Q9UHW5"/>
<dbReference type="BioGRID" id="119359">
    <property type="interactions" value="119"/>
</dbReference>
<dbReference type="CORUM" id="Q9UHW5"/>
<dbReference type="FunCoup" id="Q9UHW5">
    <property type="interactions" value="1181"/>
</dbReference>
<dbReference type="IntAct" id="Q9UHW5">
    <property type="interactions" value="103"/>
</dbReference>
<dbReference type="MINT" id="Q9UHW5"/>
<dbReference type="STRING" id="9606.ENSP00000442770"/>
<dbReference type="GlyGen" id="Q9UHW5">
    <property type="glycosylation" value="1 site, 1 O-linked glycan (1 site)"/>
</dbReference>
<dbReference type="iPTMnet" id="Q9UHW5"/>
<dbReference type="PhosphoSitePlus" id="Q9UHW5"/>
<dbReference type="BioMuta" id="GPN3"/>
<dbReference type="DMDM" id="158564000"/>
<dbReference type="jPOST" id="Q9UHW5"/>
<dbReference type="MassIVE" id="Q9UHW5"/>
<dbReference type="PaxDb" id="9606-ENSP00000442770"/>
<dbReference type="PeptideAtlas" id="Q9UHW5"/>
<dbReference type="ProteomicsDB" id="27390"/>
<dbReference type="ProteomicsDB" id="84420">
    <molecule id="Q9UHW5-1"/>
</dbReference>
<dbReference type="ProteomicsDB" id="84421">
    <molecule id="Q9UHW5-2"/>
</dbReference>
<dbReference type="Pumba" id="Q9UHW5"/>
<dbReference type="Antibodypedia" id="31008">
    <property type="antibodies" value="56 antibodies from 16 providers"/>
</dbReference>
<dbReference type="DNASU" id="51184"/>
<dbReference type="Ensembl" id="ENST00000228827.8">
    <molecule id="Q9UHW5-1"/>
    <property type="protein sequence ID" value="ENSP00000228827.3"/>
    <property type="gene ID" value="ENSG00000111231.9"/>
</dbReference>
<dbReference type="Ensembl" id="ENST00000537466.6">
    <molecule id="Q9UHW5-2"/>
    <property type="protein sequence ID" value="ENSP00000443068.2"/>
    <property type="gene ID" value="ENSG00000111231.9"/>
</dbReference>
<dbReference type="Ensembl" id="ENST00000543199.5">
    <molecule id="Q9UHW5-3"/>
    <property type="protein sequence ID" value="ENSP00000442770.1"/>
    <property type="gene ID" value="ENSG00000111231.9"/>
</dbReference>
<dbReference type="GeneID" id="51184"/>
<dbReference type="KEGG" id="hsa:51184"/>
<dbReference type="MANE-Select" id="ENST00000228827.8">
    <property type="protein sequence ID" value="ENSP00000228827.3"/>
    <property type="RefSeq nucleotide sequence ID" value="NM_016301.4"/>
    <property type="RefSeq protein sequence ID" value="NP_057385.3"/>
</dbReference>
<dbReference type="UCSC" id="uc001tqr.4">
    <molecule id="Q9UHW5-1"/>
    <property type="organism name" value="human"/>
</dbReference>
<dbReference type="AGR" id="HGNC:30186"/>
<dbReference type="CTD" id="51184"/>
<dbReference type="DisGeNET" id="51184"/>
<dbReference type="GeneCards" id="GPN3"/>
<dbReference type="HGNC" id="HGNC:30186">
    <property type="gene designation" value="GPN3"/>
</dbReference>
<dbReference type="HPA" id="ENSG00000111231">
    <property type="expression patterns" value="Low tissue specificity"/>
</dbReference>
<dbReference type="neXtProt" id="NX_Q9UHW5"/>
<dbReference type="OpenTargets" id="ENSG00000111231"/>
<dbReference type="PharmGKB" id="PA162390164"/>
<dbReference type="VEuPathDB" id="HostDB:ENSG00000111231"/>
<dbReference type="eggNOG" id="KOG1534">
    <property type="taxonomic scope" value="Eukaryota"/>
</dbReference>
<dbReference type="GeneTree" id="ENSGT00950000183172"/>
<dbReference type="HOGENOM" id="CLU_037460_0_0_1"/>
<dbReference type="InParanoid" id="Q9UHW5"/>
<dbReference type="OMA" id="LYTHMTV"/>
<dbReference type="OrthoDB" id="5839at2759"/>
<dbReference type="PAN-GO" id="Q9UHW5">
    <property type="GO annotations" value="1 GO annotation based on evolutionary models"/>
</dbReference>
<dbReference type="PhylomeDB" id="Q9UHW5"/>
<dbReference type="TreeFam" id="TF105810"/>
<dbReference type="PathwayCommons" id="Q9UHW5"/>
<dbReference type="SignaLink" id="Q9UHW5"/>
<dbReference type="BioGRID-ORCS" id="51184">
    <property type="hits" value="726 hits in 1143 CRISPR screens"/>
</dbReference>
<dbReference type="ChiTaRS" id="GPN3">
    <property type="organism name" value="human"/>
</dbReference>
<dbReference type="GenomeRNAi" id="51184"/>
<dbReference type="Pharos" id="Q9UHW5">
    <property type="development level" value="Tbio"/>
</dbReference>
<dbReference type="PRO" id="PR:Q9UHW5"/>
<dbReference type="Proteomes" id="UP000005640">
    <property type="component" value="Chromosome 12"/>
</dbReference>
<dbReference type="RNAct" id="Q9UHW5">
    <property type="molecule type" value="protein"/>
</dbReference>
<dbReference type="Bgee" id="ENSG00000111231">
    <property type="expression patterns" value="Expressed in skeletal muscle tissue of biceps brachii and 200 other cell types or tissues"/>
</dbReference>
<dbReference type="ExpressionAtlas" id="Q9UHW5">
    <property type="expression patterns" value="baseline and differential"/>
</dbReference>
<dbReference type="GO" id="GO:0032991">
    <property type="term" value="C:protein-containing complex"/>
    <property type="evidence" value="ECO:0000314"/>
    <property type="project" value="LIFEdb"/>
</dbReference>
<dbReference type="GO" id="GO:0005525">
    <property type="term" value="F:GTP binding"/>
    <property type="evidence" value="ECO:0007669"/>
    <property type="project" value="UniProtKB-KW"/>
</dbReference>
<dbReference type="GO" id="GO:0003924">
    <property type="term" value="F:GTPase activity"/>
    <property type="evidence" value="ECO:0000318"/>
    <property type="project" value="GO_Central"/>
</dbReference>
<dbReference type="CDD" id="cd17872">
    <property type="entry name" value="GPN3"/>
    <property type="match status" value="1"/>
</dbReference>
<dbReference type="FunFam" id="3.40.50.300:FF:000616">
    <property type="entry name" value="GPN-loop GTPase 3"/>
    <property type="match status" value="1"/>
</dbReference>
<dbReference type="Gene3D" id="3.40.50.300">
    <property type="entry name" value="P-loop containing nucleotide triphosphate hydrolases"/>
    <property type="match status" value="1"/>
</dbReference>
<dbReference type="InterPro" id="IPR004130">
    <property type="entry name" value="Gpn"/>
</dbReference>
<dbReference type="InterPro" id="IPR030228">
    <property type="entry name" value="Gpn3"/>
</dbReference>
<dbReference type="InterPro" id="IPR027417">
    <property type="entry name" value="P-loop_NTPase"/>
</dbReference>
<dbReference type="PANTHER" id="PTHR21231:SF7">
    <property type="entry name" value="GPN-LOOP GTPASE 3"/>
    <property type="match status" value="1"/>
</dbReference>
<dbReference type="PANTHER" id="PTHR21231">
    <property type="entry name" value="XPA-BINDING PROTEIN 1-RELATED"/>
    <property type="match status" value="1"/>
</dbReference>
<dbReference type="Pfam" id="PF03029">
    <property type="entry name" value="ATP_bind_1"/>
    <property type="match status" value="1"/>
</dbReference>
<dbReference type="SUPFAM" id="SSF52540">
    <property type="entry name" value="P-loop containing nucleoside triphosphate hydrolases"/>
    <property type="match status" value="1"/>
</dbReference>
<comment type="function">
    <text evidence="4">Small GTPase required for proper localization of RNA polymerase II (RNAPII). May act at an RNAP assembly step prior to nuclear import.</text>
</comment>
<comment type="subunit">
    <text evidence="3 4">Heterodimer with GPN1 (PubMed:21768307). Binds to RNA polymerase II (RNAPII) (PubMed:20864038, PubMed:21768307). Interacts directly with subunits RPB4 and RPB7 and the CTD of RPB1 (PubMed:21768307).</text>
</comment>
<comment type="interaction">
    <interactant intactId="EBI-395491">
        <id>Q9UHW5</id>
    </interactant>
    <interactant intactId="EBI-745137">
        <id>Q9HCN4</id>
        <label>GPN1</label>
    </interactant>
    <organismsDiffer>false</organismsDiffer>
    <experiments>5</experiments>
</comment>
<comment type="interaction">
    <interactant intactId="EBI-395491">
        <id>Q9UHW5</id>
    </interactant>
    <interactant intactId="EBI-6115579">
        <id>Q9BX10</id>
        <label>GTPBP2</label>
    </interactant>
    <organismsDiffer>false</organismsDiffer>
    <experiments>3</experiments>
</comment>
<comment type="alternative products">
    <event type="alternative splicing"/>
    <isoform>
        <id>Q9UHW5-1</id>
        <name>1</name>
        <sequence type="displayed"/>
    </isoform>
    <isoform>
        <id>Q9UHW5-2</id>
        <name>2</name>
        <sequence type="described" ref="VSP_028125"/>
    </isoform>
    <isoform>
        <id>Q9UHW5-3</id>
        <name>3</name>
        <sequence type="described" ref="VSP_047327"/>
    </isoform>
</comment>
<comment type="similarity">
    <text evidence="7">Belongs to the GPN-loop GTPase family.</text>
</comment>
<comment type="sequence caution" evidence="7">
    <conflict type="erroneous initiation">
        <sequence resource="EMBL-CDS" id="CAD97937"/>
    </conflict>
</comment>
<evidence type="ECO:0000250" key="1">
    <source>
        <dbReference type="UniProtKB" id="Q9UYR9"/>
    </source>
</evidence>
<evidence type="ECO:0000269" key="2">
    <source>
    </source>
</evidence>
<evidence type="ECO:0000269" key="3">
    <source>
    </source>
</evidence>
<evidence type="ECO:0000269" key="4">
    <source>
    </source>
</evidence>
<evidence type="ECO:0000303" key="5">
    <source>
    </source>
</evidence>
<evidence type="ECO:0000303" key="6">
    <source ref="2"/>
</evidence>
<evidence type="ECO:0000305" key="7"/>
<evidence type="ECO:0000312" key="8">
    <source>
        <dbReference type="HGNC" id="HGNC:30186"/>
    </source>
</evidence>
<organism>
    <name type="scientific">Homo sapiens</name>
    <name type="common">Human</name>
    <dbReference type="NCBI Taxonomy" id="9606"/>
    <lineage>
        <taxon>Eukaryota</taxon>
        <taxon>Metazoa</taxon>
        <taxon>Chordata</taxon>
        <taxon>Craniata</taxon>
        <taxon>Vertebrata</taxon>
        <taxon>Euteleostomi</taxon>
        <taxon>Mammalia</taxon>
        <taxon>Eutheria</taxon>
        <taxon>Euarchontoglires</taxon>
        <taxon>Primates</taxon>
        <taxon>Haplorrhini</taxon>
        <taxon>Catarrhini</taxon>
        <taxon>Hominidae</taxon>
        <taxon>Homo</taxon>
    </lineage>
</organism>
<keyword id="KW-0025">Alternative splicing</keyword>
<keyword id="KW-0342">GTP-binding</keyword>
<keyword id="KW-0378">Hydrolase</keyword>
<keyword id="KW-0547">Nucleotide-binding</keyword>
<keyword id="KW-1267">Proteomics identification</keyword>
<keyword id="KW-1185">Reference proteome</keyword>
<protein>
    <recommendedName>
        <fullName evidence="6">GPN-loop GTPase 3</fullName>
    </recommendedName>
    <alternativeName>
        <fullName>ATP-binding domain 1 family member C</fullName>
    </alternativeName>
</protein>